<sequence>MPATMSQAFIGNFLGNSPKWYKTAILSFLIINPLLFFYVDPFVAGWVLVLEFIFTLAMALKCYPLQPGGLLAIEAVAIGMTSASQVLHEIEANLEVLLLLVFMVAGIYFMKQLLLFGFTKIITKVRSKVLVSLMFCLASAFLSAFLDALTVIAVIIAVAVGFYSIYHKVASGKDFGADHDHTSEGKNAAGEDQLNEEELGAFRGFLRNLLMHAGVGTALGGVCTMVGEPQNLIIAAQANWQFGEFAVRMSPVTVPVLISGILTCYLVEKFGIFGYGAKLPTAVHRILCEYAAHEDARRTNKDNMKLIVQALVGVWLIAGLALHLASVGLIGLSVIILTTAFNGVTDEHALGKAFEEALPFTALLAVFFAVVGVIIDQHLFAPVIQWALGYEGNTQLVIFYIANGLLSMVSDNVFVGTVYINEVKAALINGQITRDQFDLLAVAINTGTNLPSVATPNGQAAFLFLLTSALAPLIRLSYGRMVWMALPYTIVLSIVGVMAIQTGFLEQATQYFYDSHTIIHHSAKEVLGTVSGH</sequence>
<protein>
    <recommendedName>
        <fullName evidence="1">Na(+)/H(+) antiporter NhaB</fullName>
    </recommendedName>
    <alternativeName>
        <fullName evidence="1">Sodium/proton antiporter NhaB</fullName>
    </alternativeName>
</protein>
<evidence type="ECO:0000255" key="1">
    <source>
        <dbReference type="HAMAP-Rule" id="MF_01599"/>
    </source>
</evidence>
<keyword id="KW-0050">Antiport</keyword>
<keyword id="KW-0997">Cell inner membrane</keyword>
<keyword id="KW-1003">Cell membrane</keyword>
<keyword id="KW-0406">Ion transport</keyword>
<keyword id="KW-0472">Membrane</keyword>
<keyword id="KW-0915">Sodium</keyword>
<keyword id="KW-0739">Sodium transport</keyword>
<keyword id="KW-0812">Transmembrane</keyword>
<keyword id="KW-1133">Transmembrane helix</keyword>
<keyword id="KW-0813">Transport</keyword>
<proteinExistence type="inferred from homology"/>
<feature type="chain" id="PRO_1000185780" description="Na(+)/H(+) antiporter NhaB">
    <location>
        <begin position="1"/>
        <end position="533"/>
    </location>
</feature>
<feature type="transmembrane region" description="Helical" evidence="1">
    <location>
        <begin position="28"/>
        <end position="50"/>
    </location>
</feature>
<feature type="transmembrane region" description="Helical" evidence="1">
    <location>
        <begin position="67"/>
        <end position="87"/>
    </location>
</feature>
<feature type="transmembrane region" description="Helical" evidence="1">
    <location>
        <begin position="96"/>
        <end position="116"/>
    </location>
</feature>
<feature type="transmembrane region" description="Helical" evidence="1">
    <location>
        <begin position="131"/>
        <end position="165"/>
    </location>
</feature>
<feature type="transmembrane region" description="Helical" evidence="1">
    <location>
        <begin position="254"/>
        <end position="274"/>
    </location>
</feature>
<feature type="transmembrane region" description="Helical" evidence="1">
    <location>
        <begin position="316"/>
        <end position="336"/>
    </location>
</feature>
<feature type="transmembrane region" description="Helical" evidence="1">
    <location>
        <begin position="364"/>
        <end position="384"/>
    </location>
</feature>
<feature type="transmembrane region" description="Helical" evidence="1">
    <location>
        <begin position="396"/>
        <end position="416"/>
    </location>
</feature>
<feature type="transmembrane region" description="Helical" evidence="1">
    <location>
        <begin position="454"/>
        <end position="474"/>
    </location>
</feature>
<feature type="transmembrane region" description="Helical" evidence="1">
    <location>
        <begin position="481"/>
        <end position="501"/>
    </location>
</feature>
<dbReference type="EMBL" id="CP001252">
    <property type="protein sequence ID" value="ACK47002.1"/>
    <property type="molecule type" value="Genomic_DNA"/>
</dbReference>
<dbReference type="RefSeq" id="WP_006081283.1">
    <property type="nucleotide sequence ID" value="NC_011663.1"/>
</dbReference>
<dbReference type="SMR" id="B8EAH3"/>
<dbReference type="GeneID" id="11772033"/>
<dbReference type="KEGG" id="sbp:Sbal223_2508"/>
<dbReference type="HOGENOM" id="CLU_041110_0_0_6"/>
<dbReference type="Proteomes" id="UP000002507">
    <property type="component" value="Chromosome"/>
</dbReference>
<dbReference type="GO" id="GO:0005886">
    <property type="term" value="C:plasma membrane"/>
    <property type="evidence" value="ECO:0007669"/>
    <property type="project" value="UniProtKB-SubCell"/>
</dbReference>
<dbReference type="GO" id="GO:0015385">
    <property type="term" value="F:sodium:proton antiporter activity"/>
    <property type="evidence" value="ECO:0007669"/>
    <property type="project" value="InterPro"/>
</dbReference>
<dbReference type="HAMAP" id="MF_01599">
    <property type="entry name" value="NhaB"/>
    <property type="match status" value="1"/>
</dbReference>
<dbReference type="InterPro" id="IPR004671">
    <property type="entry name" value="Na+/H+_antiporter_NhaB"/>
</dbReference>
<dbReference type="NCBIfam" id="TIGR00774">
    <property type="entry name" value="NhaB"/>
    <property type="match status" value="1"/>
</dbReference>
<dbReference type="NCBIfam" id="NF007093">
    <property type="entry name" value="PRK09547.1"/>
    <property type="match status" value="1"/>
</dbReference>
<dbReference type="PANTHER" id="PTHR43302:SF1">
    <property type="entry name" value="NA(+)_H(+) ANTIPORTER NHAB"/>
    <property type="match status" value="1"/>
</dbReference>
<dbReference type="PANTHER" id="PTHR43302">
    <property type="entry name" value="TRANSPORTER ARSB-RELATED"/>
    <property type="match status" value="1"/>
</dbReference>
<dbReference type="Pfam" id="PF06450">
    <property type="entry name" value="NhaB"/>
    <property type="match status" value="1"/>
</dbReference>
<reference key="1">
    <citation type="submission" date="2008-12" db="EMBL/GenBank/DDBJ databases">
        <title>Complete sequence of chromosome of Shewanella baltica OS223.</title>
        <authorList>
            <consortium name="US DOE Joint Genome Institute"/>
            <person name="Lucas S."/>
            <person name="Copeland A."/>
            <person name="Lapidus A."/>
            <person name="Glavina del Rio T."/>
            <person name="Dalin E."/>
            <person name="Tice H."/>
            <person name="Bruce D."/>
            <person name="Goodwin L."/>
            <person name="Pitluck S."/>
            <person name="Chertkov O."/>
            <person name="Meincke L."/>
            <person name="Brettin T."/>
            <person name="Detter J.C."/>
            <person name="Han C."/>
            <person name="Kuske C.R."/>
            <person name="Larimer F."/>
            <person name="Land M."/>
            <person name="Hauser L."/>
            <person name="Kyrpides N."/>
            <person name="Ovchinnikova G."/>
            <person name="Brettar I."/>
            <person name="Rodrigues J."/>
            <person name="Konstantinidis K."/>
            <person name="Tiedje J."/>
        </authorList>
    </citation>
    <scope>NUCLEOTIDE SEQUENCE [LARGE SCALE GENOMIC DNA]</scope>
    <source>
        <strain>OS223</strain>
    </source>
</reference>
<comment type="function">
    <text evidence="1">Na(+)/H(+) antiporter that extrudes sodium in exchange for external protons.</text>
</comment>
<comment type="catalytic activity">
    <reaction evidence="1">
        <text>2 Na(+)(in) + 3 H(+)(out) = 2 Na(+)(out) + 3 H(+)(in)</text>
        <dbReference type="Rhea" id="RHEA:29247"/>
        <dbReference type="ChEBI" id="CHEBI:15378"/>
        <dbReference type="ChEBI" id="CHEBI:29101"/>
    </reaction>
    <physiologicalReaction direction="left-to-right" evidence="1">
        <dbReference type="Rhea" id="RHEA:29248"/>
    </physiologicalReaction>
</comment>
<comment type="subcellular location">
    <subcellularLocation>
        <location evidence="1">Cell inner membrane</location>
        <topology evidence="1">Multi-pass membrane protein</topology>
    </subcellularLocation>
</comment>
<comment type="similarity">
    <text evidence="1">Belongs to the NhaB Na(+)/H(+) (TC 2.A.34) antiporter family.</text>
</comment>
<gene>
    <name evidence="1" type="primary">nhaB</name>
    <name type="ordered locus">Sbal223_2508</name>
</gene>
<organism>
    <name type="scientific">Shewanella baltica (strain OS223)</name>
    <dbReference type="NCBI Taxonomy" id="407976"/>
    <lineage>
        <taxon>Bacteria</taxon>
        <taxon>Pseudomonadati</taxon>
        <taxon>Pseudomonadota</taxon>
        <taxon>Gammaproteobacteria</taxon>
        <taxon>Alteromonadales</taxon>
        <taxon>Shewanellaceae</taxon>
        <taxon>Shewanella</taxon>
    </lineage>
</organism>
<name>NHAB_SHEB2</name>
<accession>B8EAH3</accession>